<proteinExistence type="inferred from homology"/>
<name>KINX_DICDI</name>
<comment type="catalytic activity">
    <reaction>
        <text>L-seryl-[protein] + ATP = O-phospho-L-seryl-[protein] + ADP + H(+)</text>
        <dbReference type="Rhea" id="RHEA:17989"/>
        <dbReference type="Rhea" id="RHEA-COMP:9863"/>
        <dbReference type="Rhea" id="RHEA-COMP:11604"/>
        <dbReference type="ChEBI" id="CHEBI:15378"/>
        <dbReference type="ChEBI" id="CHEBI:29999"/>
        <dbReference type="ChEBI" id="CHEBI:30616"/>
        <dbReference type="ChEBI" id="CHEBI:83421"/>
        <dbReference type="ChEBI" id="CHEBI:456216"/>
        <dbReference type="EC" id="2.7.11.1"/>
    </reaction>
</comment>
<comment type="catalytic activity">
    <reaction>
        <text>L-threonyl-[protein] + ATP = O-phospho-L-threonyl-[protein] + ADP + H(+)</text>
        <dbReference type="Rhea" id="RHEA:46608"/>
        <dbReference type="Rhea" id="RHEA-COMP:11060"/>
        <dbReference type="Rhea" id="RHEA-COMP:11605"/>
        <dbReference type="ChEBI" id="CHEBI:15378"/>
        <dbReference type="ChEBI" id="CHEBI:30013"/>
        <dbReference type="ChEBI" id="CHEBI:30616"/>
        <dbReference type="ChEBI" id="CHEBI:61977"/>
        <dbReference type="ChEBI" id="CHEBI:456216"/>
        <dbReference type="EC" id="2.7.11.1"/>
    </reaction>
</comment>
<comment type="similarity">
    <text evidence="4">Belongs to the protein kinase superfamily. TKL Ser/Thr protein kinase family.</text>
</comment>
<sequence>MGSVDTSVPSFDRAWSIKYEDLDFISEIGSGGFGKVFKGEYLGAPVAIKKIHILPDDPNRVDLEKFLNREIETIKLFTHPNVIQFVGISENNGILFIVTELIEGGDLQYYLKNQSIDLPWFLRANIALDVSLAMSYLHSKSIVHRDLKSTNLLVDKNWKIKVCDFGFARIVEEDNNKSMTICGTDNWMSPEMITGLDYDERSDIFSFGIVLLEIISRVKPAPYMRDASFGLAEDIVRNQLIPTDCPESLIDLTFNCCSVDPNNRPSFKEISQTLKQIKTTLDSNIVYPEIRDFEQQQKISTTNGNNKQNGGAPKINNLPLQYSNNNNNIYDDDDDDDDDDDDNDSFPRPYSDNSNSNVTLESNSNYNSSTINGQEQQEQQEQQQQQQVKEERDEGEIEQDDDNIEVYDSDYQKKLEEHQKELLERQNQNQEGSTDENEVYEQEEEEEEEDEEEQVISTPAKKRISFGQDTFHTYEAYRTDDEDDDDDEEDEEEGDEYDHGYDDFDEDDEDDEEYDEDEDDEDERQIQYYQQQLQYQQQLQKQQEQEYQRQQQLQLQREEEEYQRQLQQQQQQQQQQQQQQQQHQQQYDDDDDDDDEEEEEYDDVIRHDTDSEEESKDKTPLPWDQHFEKQKESENKVEQEETNVVVANSQETEQQQQQQQQPKEEEEEEPTKVEDVKVETEEQTKEEHDVKVDEESTKVDEPVDEPTKVEESVEQVKAEEPNKVEELVEEVKVEEEPTNVEEVKAEEPVEEVKVEEPVEEVKAEEPVEEVKAEEPVEEVKTEEPVEEVKVEEPVEEVKVEEPVEEVEAEESVQEPVEEVKVDEPTKVEEPTKVEEPIEEVKVEEPTKVEESIEEVKVEEPTKVEEPVEEIKPEEPTKVEESVEDVKVEDVKVEEVKAEEPTKAEESVEDVKVEEPIKVEEPVKVEEPVKVEEPVKVEEPIKVEEPIKVEEPIKVEEPIKVEEPIKVEEPVKVEVASPVVQEQPPQQEEKPEVVSTSTITIASSPQQSSNSPPSTPVKQPQQQEIEVNSTPIKQQQQQQQTPTQQTQTPTKQHTEINVQPTPTKTPPLPPQTNEKIPLISPNNKSNRGCCSCFIQ</sequence>
<feature type="chain" id="PRO_0000327648" description="Probable serine/threonine-protein kinase kinX">
    <location>
        <begin position="1"/>
        <end position="1094"/>
    </location>
</feature>
<feature type="domain" description="Protein kinase" evidence="1">
    <location>
        <begin position="22"/>
        <end position="281"/>
    </location>
</feature>
<feature type="region of interest" description="Disordered" evidence="3">
    <location>
        <begin position="301"/>
        <end position="884"/>
    </location>
</feature>
<feature type="region of interest" description="40 X 9 AA approximate repeats of V-K-V-E-E-P-V-E-E">
    <location>
        <begin position="676"/>
        <end position="978"/>
    </location>
</feature>
<feature type="region of interest" description="Disordered" evidence="3">
    <location>
        <begin position="946"/>
        <end position="1083"/>
    </location>
</feature>
<feature type="compositionally biased region" description="Acidic residues" evidence="3">
    <location>
        <begin position="330"/>
        <end position="344"/>
    </location>
</feature>
<feature type="compositionally biased region" description="Polar residues" evidence="3">
    <location>
        <begin position="351"/>
        <end position="373"/>
    </location>
</feature>
<feature type="compositionally biased region" description="Low complexity" evidence="3">
    <location>
        <begin position="374"/>
        <end position="387"/>
    </location>
</feature>
<feature type="compositionally biased region" description="Acidic residues" evidence="3">
    <location>
        <begin position="393"/>
        <end position="408"/>
    </location>
</feature>
<feature type="compositionally biased region" description="Basic and acidic residues" evidence="3">
    <location>
        <begin position="410"/>
        <end position="424"/>
    </location>
</feature>
<feature type="compositionally biased region" description="Acidic residues" evidence="3">
    <location>
        <begin position="433"/>
        <end position="454"/>
    </location>
</feature>
<feature type="compositionally biased region" description="Acidic residues" evidence="3">
    <location>
        <begin position="480"/>
        <end position="496"/>
    </location>
</feature>
<feature type="compositionally biased region" description="Acidic residues" evidence="3">
    <location>
        <begin position="503"/>
        <end position="523"/>
    </location>
</feature>
<feature type="compositionally biased region" description="Low complexity" evidence="3">
    <location>
        <begin position="526"/>
        <end position="542"/>
    </location>
</feature>
<feature type="compositionally biased region" description="Low complexity" evidence="3">
    <location>
        <begin position="564"/>
        <end position="585"/>
    </location>
</feature>
<feature type="compositionally biased region" description="Acidic residues" evidence="3">
    <location>
        <begin position="587"/>
        <end position="602"/>
    </location>
</feature>
<feature type="compositionally biased region" description="Basic and acidic residues" evidence="3">
    <location>
        <begin position="603"/>
        <end position="639"/>
    </location>
</feature>
<feature type="compositionally biased region" description="Low complexity" evidence="3">
    <location>
        <begin position="650"/>
        <end position="661"/>
    </location>
</feature>
<feature type="compositionally biased region" description="Basic and acidic residues" evidence="3">
    <location>
        <begin position="670"/>
        <end position="801"/>
    </location>
</feature>
<feature type="compositionally biased region" description="Acidic residues" evidence="3">
    <location>
        <begin position="802"/>
        <end position="816"/>
    </location>
</feature>
<feature type="compositionally biased region" description="Basic and acidic residues" evidence="3">
    <location>
        <begin position="817"/>
        <end position="884"/>
    </location>
</feature>
<feature type="compositionally biased region" description="Basic and acidic residues" evidence="3">
    <location>
        <begin position="946"/>
        <end position="971"/>
    </location>
</feature>
<feature type="compositionally biased region" description="Low complexity" evidence="3">
    <location>
        <begin position="972"/>
        <end position="985"/>
    </location>
</feature>
<feature type="compositionally biased region" description="Low complexity" evidence="3">
    <location>
        <begin position="992"/>
        <end position="1011"/>
    </location>
</feature>
<feature type="compositionally biased region" description="Polar residues" evidence="3">
    <location>
        <begin position="1016"/>
        <end position="1031"/>
    </location>
</feature>
<feature type="compositionally biased region" description="Low complexity" evidence="3">
    <location>
        <begin position="1032"/>
        <end position="1050"/>
    </location>
</feature>
<feature type="active site" description="Proton acceptor" evidence="1 2">
    <location>
        <position position="146"/>
    </location>
</feature>
<feature type="binding site" evidence="1">
    <location>
        <begin position="28"/>
        <end position="36"/>
    </location>
    <ligand>
        <name>ATP</name>
        <dbReference type="ChEBI" id="CHEBI:30616"/>
    </ligand>
</feature>
<feature type="binding site" evidence="1">
    <location>
        <position position="49"/>
    </location>
    <ligand>
        <name>ATP</name>
        <dbReference type="ChEBI" id="CHEBI:30616"/>
    </ligand>
</feature>
<feature type="sequence conflict" description="In Ref. 1; CAA86053." evidence="4" ref="1">
    <original>Q</original>
    <variation>H</variation>
    <location>
        <position position="581"/>
    </location>
</feature>
<feature type="sequence conflict" description="In Ref. 1; CAA86053." evidence="4" ref="1">
    <original>E</original>
    <variation>D</variation>
    <location>
        <position position="653"/>
    </location>
</feature>
<feature type="sequence conflict" description="In Ref. 1; CAA86053." evidence="4" ref="1">
    <original>I</original>
    <variation>L</variation>
    <location>
        <position position="1031"/>
    </location>
</feature>
<keyword id="KW-0067">ATP-binding</keyword>
<keyword id="KW-0418">Kinase</keyword>
<keyword id="KW-0547">Nucleotide-binding</keyword>
<keyword id="KW-1185">Reference proteome</keyword>
<keyword id="KW-0677">Repeat</keyword>
<keyword id="KW-0723">Serine/threonine-protein kinase</keyword>
<keyword id="KW-0808">Transferase</keyword>
<gene>
    <name type="primary">kinX</name>
    <name type="ORF">DDB_G0283391</name>
</gene>
<dbReference type="EC" id="2.7.11.1"/>
<dbReference type="EMBL" id="Z37981">
    <property type="protein sequence ID" value="CAA86053.1"/>
    <property type="molecule type" value="Genomic_DNA"/>
</dbReference>
<dbReference type="EMBL" id="AAFI02000055">
    <property type="protein sequence ID" value="EAL65680.1"/>
    <property type="molecule type" value="Genomic_DNA"/>
</dbReference>
<dbReference type="PIR" id="S52076">
    <property type="entry name" value="S49313"/>
</dbReference>
<dbReference type="RefSeq" id="XP_639097.1">
    <property type="nucleotide sequence ID" value="XM_634005.1"/>
</dbReference>
<dbReference type="SMR" id="Q23915"/>
<dbReference type="STRING" id="44689.Q23915"/>
<dbReference type="GlyGen" id="Q23915">
    <property type="glycosylation" value="1 site"/>
</dbReference>
<dbReference type="PaxDb" id="44689-DDB0191487"/>
<dbReference type="EnsemblProtists" id="EAL65680">
    <property type="protein sequence ID" value="EAL65680"/>
    <property type="gene ID" value="DDB_G0283391"/>
</dbReference>
<dbReference type="GeneID" id="8624121"/>
<dbReference type="KEGG" id="ddi:DDB_G0283391"/>
<dbReference type="dictyBase" id="DDB_G0283391">
    <property type="gene designation" value="kinX"/>
</dbReference>
<dbReference type="VEuPathDB" id="AmoebaDB:DDB_G0283391"/>
<dbReference type="eggNOG" id="ENOG502RYA2">
    <property type="taxonomic scope" value="Eukaryota"/>
</dbReference>
<dbReference type="HOGENOM" id="CLU_284199_0_0_1"/>
<dbReference type="InParanoid" id="Q23915"/>
<dbReference type="OMA" id="NHTWIRM"/>
<dbReference type="PRO" id="PR:Q23915"/>
<dbReference type="Proteomes" id="UP000002195">
    <property type="component" value="Chromosome 4"/>
</dbReference>
<dbReference type="GO" id="GO:0005737">
    <property type="term" value="C:cytoplasm"/>
    <property type="evidence" value="ECO:0000318"/>
    <property type="project" value="GO_Central"/>
</dbReference>
<dbReference type="GO" id="GO:0005524">
    <property type="term" value="F:ATP binding"/>
    <property type="evidence" value="ECO:0007669"/>
    <property type="project" value="UniProtKB-KW"/>
</dbReference>
<dbReference type="GO" id="GO:0004672">
    <property type="term" value="F:protein kinase activity"/>
    <property type="evidence" value="ECO:0000318"/>
    <property type="project" value="GO_Central"/>
</dbReference>
<dbReference type="GO" id="GO:0106310">
    <property type="term" value="F:protein serine kinase activity"/>
    <property type="evidence" value="ECO:0007669"/>
    <property type="project" value="RHEA"/>
</dbReference>
<dbReference type="GO" id="GO:0004674">
    <property type="term" value="F:protein serine/threonine kinase activity"/>
    <property type="evidence" value="ECO:0007669"/>
    <property type="project" value="UniProtKB-KW"/>
</dbReference>
<dbReference type="GO" id="GO:0007165">
    <property type="term" value="P:signal transduction"/>
    <property type="evidence" value="ECO:0000318"/>
    <property type="project" value="GO_Central"/>
</dbReference>
<dbReference type="CDD" id="cd13999">
    <property type="entry name" value="STKc_MAP3K-like"/>
    <property type="match status" value="1"/>
</dbReference>
<dbReference type="Gene3D" id="1.10.510.10">
    <property type="entry name" value="Transferase(Phosphotransferase) domain 1"/>
    <property type="match status" value="1"/>
</dbReference>
<dbReference type="InterPro" id="IPR050940">
    <property type="entry name" value="Actin_reg-Ser/Thr_kinase"/>
</dbReference>
<dbReference type="InterPro" id="IPR011009">
    <property type="entry name" value="Kinase-like_dom_sf"/>
</dbReference>
<dbReference type="InterPro" id="IPR000719">
    <property type="entry name" value="Prot_kinase_dom"/>
</dbReference>
<dbReference type="InterPro" id="IPR017441">
    <property type="entry name" value="Protein_kinase_ATP_BS"/>
</dbReference>
<dbReference type="InterPro" id="IPR001245">
    <property type="entry name" value="Ser-Thr/Tyr_kinase_cat_dom"/>
</dbReference>
<dbReference type="InterPro" id="IPR008271">
    <property type="entry name" value="Ser/Thr_kinase_AS"/>
</dbReference>
<dbReference type="PANTHER" id="PTHR46485:SF5">
    <property type="entry name" value="CENTER DIVIDER, ISOFORM A"/>
    <property type="match status" value="1"/>
</dbReference>
<dbReference type="PANTHER" id="PTHR46485">
    <property type="entry name" value="LIM DOMAIN KINASE 1"/>
    <property type="match status" value="1"/>
</dbReference>
<dbReference type="Pfam" id="PF07714">
    <property type="entry name" value="PK_Tyr_Ser-Thr"/>
    <property type="match status" value="1"/>
</dbReference>
<dbReference type="PRINTS" id="PR00109">
    <property type="entry name" value="TYRKINASE"/>
</dbReference>
<dbReference type="SMART" id="SM00220">
    <property type="entry name" value="S_TKc"/>
    <property type="match status" value="1"/>
</dbReference>
<dbReference type="SUPFAM" id="SSF56112">
    <property type="entry name" value="Protein kinase-like (PK-like)"/>
    <property type="match status" value="1"/>
</dbReference>
<dbReference type="PROSITE" id="PS00107">
    <property type="entry name" value="PROTEIN_KINASE_ATP"/>
    <property type="match status" value="1"/>
</dbReference>
<dbReference type="PROSITE" id="PS50011">
    <property type="entry name" value="PROTEIN_KINASE_DOM"/>
    <property type="match status" value="1"/>
</dbReference>
<dbReference type="PROSITE" id="PS00108">
    <property type="entry name" value="PROTEIN_KINASE_ST"/>
    <property type="match status" value="1"/>
</dbReference>
<protein>
    <recommendedName>
        <fullName>Probable serine/threonine-protein kinase kinX</fullName>
        <ecNumber>2.7.11.1</ecNumber>
    </recommendedName>
</protein>
<evidence type="ECO:0000255" key="1">
    <source>
        <dbReference type="PROSITE-ProRule" id="PRU00159"/>
    </source>
</evidence>
<evidence type="ECO:0000255" key="2">
    <source>
        <dbReference type="PROSITE-ProRule" id="PRU10027"/>
    </source>
</evidence>
<evidence type="ECO:0000256" key="3">
    <source>
        <dbReference type="SAM" id="MobiDB-lite"/>
    </source>
</evidence>
<evidence type="ECO:0000305" key="4"/>
<organism>
    <name type="scientific">Dictyostelium discoideum</name>
    <name type="common">Social amoeba</name>
    <dbReference type="NCBI Taxonomy" id="44689"/>
    <lineage>
        <taxon>Eukaryota</taxon>
        <taxon>Amoebozoa</taxon>
        <taxon>Evosea</taxon>
        <taxon>Eumycetozoa</taxon>
        <taxon>Dictyostelia</taxon>
        <taxon>Dictyosteliales</taxon>
        <taxon>Dictyosteliaceae</taxon>
        <taxon>Dictyostelium</taxon>
    </lineage>
</organism>
<reference key="1">
    <citation type="journal article" date="1995" name="Biochim. Biophys. Acta">
        <title>A protein kinase from Dictyostelium discoideum with an unusual acidic repeat domain.</title>
        <authorList>
            <person name="Wetterauer B.W."/>
            <person name="Hamker U."/>
            <person name="von Haeseler A."/>
            <person name="MacWilliams H.K."/>
            <person name="Simon M.-N."/>
            <person name="Veron M."/>
        </authorList>
    </citation>
    <scope>NUCLEOTIDE SEQUENCE [GENOMIC DNA]</scope>
    <source>
        <strain>AX3</strain>
    </source>
</reference>
<reference key="2">
    <citation type="journal article" date="2005" name="Nature">
        <title>The genome of the social amoeba Dictyostelium discoideum.</title>
        <authorList>
            <person name="Eichinger L."/>
            <person name="Pachebat J.A."/>
            <person name="Gloeckner G."/>
            <person name="Rajandream M.A."/>
            <person name="Sucgang R."/>
            <person name="Berriman M."/>
            <person name="Song J."/>
            <person name="Olsen R."/>
            <person name="Szafranski K."/>
            <person name="Xu Q."/>
            <person name="Tunggal B."/>
            <person name="Kummerfeld S."/>
            <person name="Madera M."/>
            <person name="Konfortov B.A."/>
            <person name="Rivero F."/>
            <person name="Bankier A.T."/>
            <person name="Lehmann R."/>
            <person name="Hamlin N."/>
            <person name="Davies R."/>
            <person name="Gaudet P."/>
            <person name="Fey P."/>
            <person name="Pilcher K."/>
            <person name="Chen G."/>
            <person name="Saunders D."/>
            <person name="Sodergren E.J."/>
            <person name="Davis P."/>
            <person name="Kerhornou A."/>
            <person name="Nie X."/>
            <person name="Hall N."/>
            <person name="Anjard C."/>
            <person name="Hemphill L."/>
            <person name="Bason N."/>
            <person name="Farbrother P."/>
            <person name="Desany B."/>
            <person name="Just E."/>
            <person name="Morio T."/>
            <person name="Rost R."/>
            <person name="Churcher C.M."/>
            <person name="Cooper J."/>
            <person name="Haydock S."/>
            <person name="van Driessche N."/>
            <person name="Cronin A."/>
            <person name="Goodhead I."/>
            <person name="Muzny D.M."/>
            <person name="Mourier T."/>
            <person name="Pain A."/>
            <person name="Lu M."/>
            <person name="Harper D."/>
            <person name="Lindsay R."/>
            <person name="Hauser H."/>
            <person name="James K.D."/>
            <person name="Quiles M."/>
            <person name="Madan Babu M."/>
            <person name="Saito T."/>
            <person name="Buchrieser C."/>
            <person name="Wardroper A."/>
            <person name="Felder M."/>
            <person name="Thangavelu M."/>
            <person name="Johnson D."/>
            <person name="Knights A."/>
            <person name="Loulseged H."/>
            <person name="Mungall K.L."/>
            <person name="Oliver K."/>
            <person name="Price C."/>
            <person name="Quail M.A."/>
            <person name="Urushihara H."/>
            <person name="Hernandez J."/>
            <person name="Rabbinowitsch E."/>
            <person name="Steffen D."/>
            <person name="Sanders M."/>
            <person name="Ma J."/>
            <person name="Kohara Y."/>
            <person name="Sharp S."/>
            <person name="Simmonds M.N."/>
            <person name="Spiegler S."/>
            <person name="Tivey A."/>
            <person name="Sugano S."/>
            <person name="White B."/>
            <person name="Walker D."/>
            <person name="Woodward J.R."/>
            <person name="Winckler T."/>
            <person name="Tanaka Y."/>
            <person name="Shaulsky G."/>
            <person name="Schleicher M."/>
            <person name="Weinstock G.M."/>
            <person name="Rosenthal A."/>
            <person name="Cox E.C."/>
            <person name="Chisholm R.L."/>
            <person name="Gibbs R.A."/>
            <person name="Loomis W.F."/>
            <person name="Platzer M."/>
            <person name="Kay R.R."/>
            <person name="Williams J.G."/>
            <person name="Dear P.H."/>
            <person name="Noegel A.A."/>
            <person name="Barrell B.G."/>
            <person name="Kuspa A."/>
        </authorList>
    </citation>
    <scope>NUCLEOTIDE SEQUENCE [LARGE SCALE GENOMIC DNA]</scope>
    <source>
        <strain>AX4</strain>
    </source>
</reference>
<accession>Q23915</accession>
<accession>Q54QZ4</accession>